<organism>
    <name type="scientific">Anaeromyxobacter sp. (strain Fw109-5)</name>
    <dbReference type="NCBI Taxonomy" id="404589"/>
    <lineage>
        <taxon>Bacteria</taxon>
        <taxon>Pseudomonadati</taxon>
        <taxon>Myxococcota</taxon>
        <taxon>Myxococcia</taxon>
        <taxon>Myxococcales</taxon>
        <taxon>Cystobacterineae</taxon>
        <taxon>Anaeromyxobacteraceae</taxon>
        <taxon>Anaeromyxobacter</taxon>
    </lineage>
</organism>
<sequence>MAHVAKKFKAASAKVDRVKRYKLDEAMSLVKQTATKKFDETVDAAINLGVDPKHADQVVRGAVVLPHGMGKAVKIAVFAKGDKAREAQEAGADIVGAEDLAEKVQGGFMDFDKVLATPDMMGVVGRLGKVLGPRGLMPNPKVGTVSADIARAVKEQKAGKVEFRVEKAGIVHVPFGKASFEPEKLKANFSAIMEIIYKAKPQTAKGVYVKNVTLSTTMGPGIKLDLSELAAAHG</sequence>
<reference key="1">
    <citation type="journal article" date="2015" name="Genome Announc.">
        <title>Complete genome sequence of Anaeromyxobacter sp. Fw109-5, an anaerobic, metal-reducing bacterium isolated from a contaminated subsurface environment.</title>
        <authorList>
            <person name="Hwang C."/>
            <person name="Copeland A."/>
            <person name="Lucas S."/>
            <person name="Lapidus A."/>
            <person name="Barry K."/>
            <person name="Glavina Del Rio T."/>
            <person name="Dalin E."/>
            <person name="Tice H."/>
            <person name="Pitluck S."/>
            <person name="Sims D."/>
            <person name="Brettin T."/>
            <person name="Bruce D.C."/>
            <person name="Detter J.C."/>
            <person name="Han C.S."/>
            <person name="Schmutz J."/>
            <person name="Larimer F.W."/>
            <person name="Land M.L."/>
            <person name="Hauser L.J."/>
            <person name="Kyrpides N."/>
            <person name="Lykidis A."/>
            <person name="Richardson P."/>
            <person name="Belieav A."/>
            <person name="Sanford R.A."/>
            <person name="Loeffler F.E."/>
            <person name="Fields M.W."/>
        </authorList>
    </citation>
    <scope>NUCLEOTIDE SEQUENCE [LARGE SCALE GENOMIC DNA]</scope>
    <source>
        <strain>Fw109-5</strain>
    </source>
</reference>
<dbReference type="EMBL" id="CP000769">
    <property type="protein sequence ID" value="ABS26426.1"/>
    <property type="molecule type" value="Genomic_DNA"/>
</dbReference>
<dbReference type="RefSeq" id="WP_012097008.1">
    <property type="nucleotide sequence ID" value="NC_009675.1"/>
</dbReference>
<dbReference type="SMR" id="A7HCI0"/>
<dbReference type="STRING" id="404589.Anae109_2224"/>
<dbReference type="KEGG" id="afw:Anae109_2224"/>
<dbReference type="eggNOG" id="COG0081">
    <property type="taxonomic scope" value="Bacteria"/>
</dbReference>
<dbReference type="HOGENOM" id="CLU_062853_0_0_7"/>
<dbReference type="OrthoDB" id="9803740at2"/>
<dbReference type="Proteomes" id="UP000006382">
    <property type="component" value="Chromosome"/>
</dbReference>
<dbReference type="GO" id="GO:0022625">
    <property type="term" value="C:cytosolic large ribosomal subunit"/>
    <property type="evidence" value="ECO:0007669"/>
    <property type="project" value="TreeGrafter"/>
</dbReference>
<dbReference type="GO" id="GO:0019843">
    <property type="term" value="F:rRNA binding"/>
    <property type="evidence" value="ECO:0007669"/>
    <property type="project" value="UniProtKB-UniRule"/>
</dbReference>
<dbReference type="GO" id="GO:0003735">
    <property type="term" value="F:structural constituent of ribosome"/>
    <property type="evidence" value="ECO:0007669"/>
    <property type="project" value="InterPro"/>
</dbReference>
<dbReference type="GO" id="GO:0000049">
    <property type="term" value="F:tRNA binding"/>
    <property type="evidence" value="ECO:0007669"/>
    <property type="project" value="UniProtKB-KW"/>
</dbReference>
<dbReference type="GO" id="GO:0006417">
    <property type="term" value="P:regulation of translation"/>
    <property type="evidence" value="ECO:0007669"/>
    <property type="project" value="UniProtKB-KW"/>
</dbReference>
<dbReference type="GO" id="GO:0006412">
    <property type="term" value="P:translation"/>
    <property type="evidence" value="ECO:0007669"/>
    <property type="project" value="UniProtKB-UniRule"/>
</dbReference>
<dbReference type="CDD" id="cd00403">
    <property type="entry name" value="Ribosomal_L1"/>
    <property type="match status" value="1"/>
</dbReference>
<dbReference type="FunFam" id="3.40.50.790:FF:000001">
    <property type="entry name" value="50S ribosomal protein L1"/>
    <property type="match status" value="1"/>
</dbReference>
<dbReference type="Gene3D" id="3.30.190.20">
    <property type="match status" value="1"/>
</dbReference>
<dbReference type="Gene3D" id="3.40.50.790">
    <property type="match status" value="1"/>
</dbReference>
<dbReference type="HAMAP" id="MF_01318_B">
    <property type="entry name" value="Ribosomal_uL1_B"/>
    <property type="match status" value="1"/>
</dbReference>
<dbReference type="InterPro" id="IPR005878">
    <property type="entry name" value="Ribosom_uL1_bac-type"/>
</dbReference>
<dbReference type="InterPro" id="IPR002143">
    <property type="entry name" value="Ribosomal_uL1"/>
</dbReference>
<dbReference type="InterPro" id="IPR023674">
    <property type="entry name" value="Ribosomal_uL1-like"/>
</dbReference>
<dbReference type="InterPro" id="IPR028364">
    <property type="entry name" value="Ribosomal_uL1/biogenesis"/>
</dbReference>
<dbReference type="InterPro" id="IPR016095">
    <property type="entry name" value="Ribosomal_uL1_3-a/b-sand"/>
</dbReference>
<dbReference type="InterPro" id="IPR023673">
    <property type="entry name" value="Ribosomal_uL1_CS"/>
</dbReference>
<dbReference type="NCBIfam" id="TIGR01169">
    <property type="entry name" value="rplA_bact"/>
    <property type="match status" value="1"/>
</dbReference>
<dbReference type="PANTHER" id="PTHR36427">
    <property type="entry name" value="54S RIBOSOMAL PROTEIN L1, MITOCHONDRIAL"/>
    <property type="match status" value="1"/>
</dbReference>
<dbReference type="PANTHER" id="PTHR36427:SF3">
    <property type="entry name" value="LARGE RIBOSOMAL SUBUNIT PROTEIN UL1M"/>
    <property type="match status" value="1"/>
</dbReference>
<dbReference type="Pfam" id="PF00687">
    <property type="entry name" value="Ribosomal_L1"/>
    <property type="match status" value="1"/>
</dbReference>
<dbReference type="PIRSF" id="PIRSF002155">
    <property type="entry name" value="Ribosomal_L1"/>
    <property type="match status" value="1"/>
</dbReference>
<dbReference type="SUPFAM" id="SSF56808">
    <property type="entry name" value="Ribosomal protein L1"/>
    <property type="match status" value="1"/>
</dbReference>
<dbReference type="PROSITE" id="PS01199">
    <property type="entry name" value="RIBOSOMAL_L1"/>
    <property type="match status" value="1"/>
</dbReference>
<protein>
    <recommendedName>
        <fullName evidence="1">Large ribosomal subunit protein uL1</fullName>
    </recommendedName>
    <alternativeName>
        <fullName evidence="2">50S ribosomal protein L1</fullName>
    </alternativeName>
</protein>
<accession>A7HCI0</accession>
<comment type="function">
    <text evidence="1">Binds directly to 23S rRNA. The L1 stalk is quite mobile in the ribosome, and is involved in E site tRNA release.</text>
</comment>
<comment type="function">
    <text evidence="1">Protein L1 is also a translational repressor protein, it controls the translation of the L11 operon by binding to its mRNA.</text>
</comment>
<comment type="subunit">
    <text evidence="1">Part of the 50S ribosomal subunit.</text>
</comment>
<comment type="similarity">
    <text evidence="1">Belongs to the universal ribosomal protein uL1 family.</text>
</comment>
<keyword id="KW-1185">Reference proteome</keyword>
<keyword id="KW-0678">Repressor</keyword>
<keyword id="KW-0687">Ribonucleoprotein</keyword>
<keyword id="KW-0689">Ribosomal protein</keyword>
<keyword id="KW-0694">RNA-binding</keyword>
<keyword id="KW-0699">rRNA-binding</keyword>
<keyword id="KW-0810">Translation regulation</keyword>
<keyword id="KW-0820">tRNA-binding</keyword>
<gene>
    <name evidence="1" type="primary">rplA</name>
    <name type="ordered locus">Anae109_2224</name>
</gene>
<proteinExistence type="inferred from homology"/>
<feature type="chain" id="PRO_1000051899" description="Large ribosomal subunit protein uL1">
    <location>
        <begin position="1"/>
        <end position="234"/>
    </location>
</feature>
<evidence type="ECO:0000255" key="1">
    <source>
        <dbReference type="HAMAP-Rule" id="MF_01318"/>
    </source>
</evidence>
<evidence type="ECO:0000305" key="2"/>
<name>RL1_ANADF</name>